<reference key="1">
    <citation type="journal article" date="2011" name="Toxicon">
        <title>cDNA cloning, structural, and functional analyses of venom phospholipases A and a Kunitz-type protease inhibitor from steppe viper Vipera ursinii renardi.</title>
        <authorList>
            <person name="Tsai I.-H."/>
            <person name="Wang Y.M."/>
            <person name="Cheng A.C."/>
            <person name="Starkov V."/>
            <person name="Osipov A."/>
            <person name="Nikitin I."/>
            <person name="Makarova Y."/>
            <person name="Ziganshin R."/>
            <person name="Utkin Y."/>
        </authorList>
    </citation>
    <scope>NUCLEOTIDE SEQUENCE [MRNA]</scope>
    <source>
        <tissue>Venom gland</tissue>
    </source>
</reference>
<proteinExistence type="evidence at transcript level"/>
<accession>F8QN52</accession>
<feature type="signal peptide" evidence="1">
    <location>
        <begin position="1"/>
        <end position="16"/>
    </location>
</feature>
<feature type="chain" id="PRO_0000419638" description="Acidic phospholipase A2 PL1">
    <location>
        <begin position="17"/>
        <end position="138"/>
    </location>
</feature>
<feature type="active site" evidence="1">
    <location>
        <position position="63"/>
    </location>
</feature>
<feature type="active site" evidence="1">
    <location>
        <position position="105"/>
    </location>
</feature>
<feature type="binding site" evidence="1">
    <location>
        <position position="43"/>
    </location>
    <ligand>
        <name>Ca(2+)</name>
        <dbReference type="ChEBI" id="CHEBI:29108"/>
    </ligand>
</feature>
<feature type="binding site" evidence="1">
    <location>
        <position position="45"/>
    </location>
    <ligand>
        <name>Ca(2+)</name>
        <dbReference type="ChEBI" id="CHEBI:29108"/>
    </ligand>
</feature>
<feature type="binding site" evidence="1">
    <location>
        <position position="47"/>
    </location>
    <ligand>
        <name>Ca(2+)</name>
        <dbReference type="ChEBI" id="CHEBI:29108"/>
    </ligand>
</feature>
<feature type="binding site" evidence="1">
    <location>
        <position position="64"/>
    </location>
    <ligand>
        <name>Ca(2+)</name>
        <dbReference type="ChEBI" id="CHEBI:29108"/>
    </ligand>
</feature>
<feature type="disulfide bond" evidence="1">
    <location>
        <begin position="42"/>
        <end position="131"/>
    </location>
</feature>
<feature type="disulfide bond" evidence="1">
    <location>
        <begin position="44"/>
        <end position="60"/>
    </location>
</feature>
<feature type="disulfide bond" evidence="1">
    <location>
        <begin position="59"/>
        <end position="111"/>
    </location>
</feature>
<feature type="disulfide bond" evidence="1">
    <location>
        <begin position="65"/>
        <end position="138"/>
    </location>
</feature>
<feature type="disulfide bond" evidence="1">
    <location>
        <begin position="66"/>
        <end position="104"/>
    </location>
</feature>
<feature type="disulfide bond" evidence="1">
    <location>
        <begin position="73"/>
        <end position="97"/>
    </location>
</feature>
<feature type="disulfide bond" evidence="1">
    <location>
        <begin position="91"/>
        <end position="102"/>
    </location>
</feature>
<protein>
    <recommendedName>
        <fullName>Acidic phospholipase A2 PL1</fullName>
        <shortName>svPLA2</shortName>
        <ecNumber>3.1.1.4</ecNumber>
    </recommendedName>
    <alternativeName>
        <fullName>Phosphatidylcholine 2-acylhydrolase</fullName>
    </alternativeName>
</protein>
<name>PA2A1_VIPRE</name>
<comment type="function">
    <text>PLA2 catalyzes the calcium-dependent hydrolysis of the 2-acyl groups in 3-sn-phosphoglycerides.</text>
</comment>
<comment type="catalytic activity">
    <reaction evidence="2 3">
        <text>a 1,2-diacyl-sn-glycero-3-phosphocholine + H2O = a 1-acyl-sn-glycero-3-phosphocholine + a fatty acid + H(+)</text>
        <dbReference type="Rhea" id="RHEA:15801"/>
        <dbReference type="ChEBI" id="CHEBI:15377"/>
        <dbReference type="ChEBI" id="CHEBI:15378"/>
        <dbReference type="ChEBI" id="CHEBI:28868"/>
        <dbReference type="ChEBI" id="CHEBI:57643"/>
        <dbReference type="ChEBI" id="CHEBI:58168"/>
        <dbReference type="EC" id="3.1.1.4"/>
    </reaction>
</comment>
<comment type="cofactor">
    <cofactor evidence="1">
        <name>Ca(2+)</name>
        <dbReference type="ChEBI" id="CHEBI:29108"/>
    </cofactor>
    <text evidence="1">Binds 1 Ca(2+) ion.</text>
</comment>
<comment type="subcellular location">
    <subcellularLocation>
        <location evidence="1">Secreted</location>
    </subcellularLocation>
</comment>
<comment type="tissue specificity">
    <text>Expressed by the venom gland.</text>
</comment>
<comment type="similarity">
    <text evidence="4">Belongs to the phospholipase A2 family. Group II subfamily. D49 sub-subfamily.</text>
</comment>
<dbReference type="EC" id="3.1.1.4"/>
<dbReference type="EMBL" id="GQ304906">
    <property type="protein sequence ID" value="ADG86230.1"/>
    <property type="molecule type" value="mRNA"/>
</dbReference>
<dbReference type="SMR" id="F8QN52"/>
<dbReference type="GO" id="GO:0005576">
    <property type="term" value="C:extracellular region"/>
    <property type="evidence" value="ECO:0007669"/>
    <property type="project" value="UniProtKB-SubCell"/>
</dbReference>
<dbReference type="GO" id="GO:0005509">
    <property type="term" value="F:calcium ion binding"/>
    <property type="evidence" value="ECO:0007669"/>
    <property type="project" value="InterPro"/>
</dbReference>
<dbReference type="GO" id="GO:0047498">
    <property type="term" value="F:calcium-dependent phospholipase A2 activity"/>
    <property type="evidence" value="ECO:0007669"/>
    <property type="project" value="TreeGrafter"/>
</dbReference>
<dbReference type="GO" id="GO:0005543">
    <property type="term" value="F:phospholipid binding"/>
    <property type="evidence" value="ECO:0007669"/>
    <property type="project" value="TreeGrafter"/>
</dbReference>
<dbReference type="GO" id="GO:0090729">
    <property type="term" value="F:toxin activity"/>
    <property type="evidence" value="ECO:0007669"/>
    <property type="project" value="UniProtKB-KW"/>
</dbReference>
<dbReference type="GO" id="GO:0050482">
    <property type="term" value="P:arachidonate secretion"/>
    <property type="evidence" value="ECO:0007669"/>
    <property type="project" value="InterPro"/>
</dbReference>
<dbReference type="GO" id="GO:0016042">
    <property type="term" value="P:lipid catabolic process"/>
    <property type="evidence" value="ECO:0007669"/>
    <property type="project" value="UniProtKB-KW"/>
</dbReference>
<dbReference type="GO" id="GO:0006644">
    <property type="term" value="P:phospholipid metabolic process"/>
    <property type="evidence" value="ECO:0007669"/>
    <property type="project" value="InterPro"/>
</dbReference>
<dbReference type="CDD" id="cd00125">
    <property type="entry name" value="PLA2c"/>
    <property type="match status" value="1"/>
</dbReference>
<dbReference type="FunFam" id="1.20.90.10:FF:000001">
    <property type="entry name" value="Basic phospholipase A2 homolog"/>
    <property type="match status" value="1"/>
</dbReference>
<dbReference type="Gene3D" id="1.20.90.10">
    <property type="entry name" value="Phospholipase A2 domain"/>
    <property type="match status" value="1"/>
</dbReference>
<dbReference type="InterPro" id="IPR001211">
    <property type="entry name" value="PLipase_A2"/>
</dbReference>
<dbReference type="InterPro" id="IPR033112">
    <property type="entry name" value="PLipase_A2_Asp_AS"/>
</dbReference>
<dbReference type="InterPro" id="IPR016090">
    <property type="entry name" value="PLipase_A2_dom"/>
</dbReference>
<dbReference type="InterPro" id="IPR036444">
    <property type="entry name" value="PLipase_A2_dom_sf"/>
</dbReference>
<dbReference type="InterPro" id="IPR033113">
    <property type="entry name" value="PLipase_A2_His_AS"/>
</dbReference>
<dbReference type="PANTHER" id="PTHR11716:SF101">
    <property type="entry name" value="BASIC PHOSPHOLIPASE A2 PA-11-LIKE"/>
    <property type="match status" value="1"/>
</dbReference>
<dbReference type="PANTHER" id="PTHR11716">
    <property type="entry name" value="PHOSPHOLIPASE A2 FAMILY MEMBER"/>
    <property type="match status" value="1"/>
</dbReference>
<dbReference type="Pfam" id="PF00068">
    <property type="entry name" value="Phospholip_A2_1"/>
    <property type="match status" value="1"/>
</dbReference>
<dbReference type="PRINTS" id="PR00389">
    <property type="entry name" value="PHPHLIPASEA2"/>
</dbReference>
<dbReference type="SMART" id="SM00085">
    <property type="entry name" value="PA2c"/>
    <property type="match status" value="1"/>
</dbReference>
<dbReference type="SUPFAM" id="SSF48619">
    <property type="entry name" value="Phospholipase A2, PLA2"/>
    <property type="match status" value="1"/>
</dbReference>
<dbReference type="PROSITE" id="PS00119">
    <property type="entry name" value="PA2_ASP"/>
    <property type="match status" value="1"/>
</dbReference>
<dbReference type="PROSITE" id="PS00118">
    <property type="entry name" value="PA2_HIS"/>
    <property type="match status" value="1"/>
</dbReference>
<keyword id="KW-1015">Disulfide bond</keyword>
<keyword id="KW-0378">Hydrolase</keyword>
<keyword id="KW-0442">Lipid degradation</keyword>
<keyword id="KW-0443">Lipid metabolism</keyword>
<keyword id="KW-0479">Metal-binding</keyword>
<keyword id="KW-0964">Secreted</keyword>
<keyword id="KW-0732">Signal</keyword>
<keyword id="KW-0800">Toxin</keyword>
<sequence length="138" mass="15384">MRALWIVAVCLIGAEGNLSQFGDMINKKTGIFGIMSYIYYGCYCGWGGKGKPLDATDRCCFVHDCCYGRVNGCDPKMGTYSYSFQNGDIVCGGDDPCLRAVCECDRVAAICFAENMNTYDKKYMLYSLFDCKEESEQC</sequence>
<organism>
    <name type="scientific">Vipera renardi</name>
    <name type="common">Steppe viper</name>
    <name type="synonym">Vipera ursinii renardi</name>
    <dbReference type="NCBI Taxonomy" id="927686"/>
    <lineage>
        <taxon>Eukaryota</taxon>
        <taxon>Metazoa</taxon>
        <taxon>Chordata</taxon>
        <taxon>Craniata</taxon>
        <taxon>Vertebrata</taxon>
        <taxon>Euteleostomi</taxon>
        <taxon>Lepidosauria</taxon>
        <taxon>Squamata</taxon>
        <taxon>Bifurcata</taxon>
        <taxon>Unidentata</taxon>
        <taxon>Episquamata</taxon>
        <taxon>Toxicofera</taxon>
        <taxon>Serpentes</taxon>
        <taxon>Colubroidea</taxon>
        <taxon>Viperidae</taxon>
        <taxon>Viperinae</taxon>
        <taxon>Vipera</taxon>
    </lineage>
</organism>
<evidence type="ECO:0000250" key="1"/>
<evidence type="ECO:0000255" key="2">
    <source>
        <dbReference type="PROSITE-ProRule" id="PRU10035"/>
    </source>
</evidence>
<evidence type="ECO:0000255" key="3">
    <source>
        <dbReference type="PROSITE-ProRule" id="PRU10036"/>
    </source>
</evidence>
<evidence type="ECO:0000305" key="4"/>